<keyword id="KW-0021">Allosteric enzyme</keyword>
<keyword id="KW-0963">Cytoplasm</keyword>
<keyword id="KW-0520">NAD</keyword>
<keyword id="KW-0560">Oxidoreductase</keyword>
<keyword id="KW-0597">Phosphoprotein</keyword>
<gene>
    <name evidence="1" type="primary">ldh</name>
    <name type="ordered locus">GTNG_0487</name>
</gene>
<evidence type="ECO:0000255" key="1">
    <source>
        <dbReference type="HAMAP-Rule" id="MF_00488"/>
    </source>
</evidence>
<sequence>MKNGGGNRVAVVGTGFVGSSYAFALMNQGIADEIVLIDANENKAKGDAMDLNHGKVFAPNPTNIWYGDYHDCRDADLVVICAGANQKPGETRLDLVDKNIAIFRSIVESVMASGFQGLFLVATNPVDILTYATWKFSGLPYERVIGSGTILDTARFRFLLGEYFDIAPTNVHAYIIGEHGDTELPVWSQADIGGVPIRKLIESKGEQAREELERIFVNVRDAAYQIIEKKGATYYGIAMGLARVTRAILHNENAILTVSAYLDGLYGERDVYIGVPAVINRHGIREVIELELDDNEQKWFQHSAATLKGVLARSFAQ</sequence>
<comment type="function">
    <text evidence="1">Catalyzes the conversion of lactate to pyruvate.</text>
</comment>
<comment type="catalytic activity">
    <reaction evidence="1">
        <text>(S)-lactate + NAD(+) = pyruvate + NADH + H(+)</text>
        <dbReference type="Rhea" id="RHEA:23444"/>
        <dbReference type="ChEBI" id="CHEBI:15361"/>
        <dbReference type="ChEBI" id="CHEBI:15378"/>
        <dbReference type="ChEBI" id="CHEBI:16651"/>
        <dbReference type="ChEBI" id="CHEBI:57540"/>
        <dbReference type="ChEBI" id="CHEBI:57945"/>
        <dbReference type="EC" id="1.1.1.27"/>
    </reaction>
</comment>
<comment type="activity regulation">
    <text evidence="1">Allosterically activated by fructose 1,6-bisphosphate (FBP).</text>
</comment>
<comment type="pathway">
    <text evidence="1">Fermentation; pyruvate fermentation to lactate; (S)-lactate from pyruvate: step 1/1.</text>
</comment>
<comment type="subunit">
    <text evidence="1">Homotetramer.</text>
</comment>
<comment type="subcellular location">
    <subcellularLocation>
        <location evidence="1">Cytoplasm</location>
    </subcellularLocation>
</comment>
<comment type="similarity">
    <text evidence="1">Belongs to the LDH/MDH superfamily. LDH family.</text>
</comment>
<protein>
    <recommendedName>
        <fullName evidence="1">L-lactate dehydrogenase</fullName>
        <shortName evidence="1">L-LDH</shortName>
        <ecNumber evidence="1">1.1.1.27</ecNumber>
    </recommendedName>
</protein>
<accession>A4IKL5</accession>
<dbReference type="EC" id="1.1.1.27" evidence="1"/>
<dbReference type="EMBL" id="CP000557">
    <property type="protein sequence ID" value="ABO65869.1"/>
    <property type="molecule type" value="Genomic_DNA"/>
</dbReference>
<dbReference type="RefSeq" id="WP_008881537.1">
    <property type="nucleotide sequence ID" value="NC_009328.1"/>
</dbReference>
<dbReference type="SMR" id="A4IKL5"/>
<dbReference type="KEGG" id="gtn:GTNG_0487"/>
<dbReference type="eggNOG" id="COG0039">
    <property type="taxonomic scope" value="Bacteria"/>
</dbReference>
<dbReference type="HOGENOM" id="CLU_045401_1_1_9"/>
<dbReference type="UniPathway" id="UPA00554">
    <property type="reaction ID" value="UER00611"/>
</dbReference>
<dbReference type="Proteomes" id="UP000001578">
    <property type="component" value="Chromosome"/>
</dbReference>
<dbReference type="GO" id="GO:0005737">
    <property type="term" value="C:cytoplasm"/>
    <property type="evidence" value="ECO:0007669"/>
    <property type="project" value="UniProtKB-SubCell"/>
</dbReference>
<dbReference type="GO" id="GO:0004459">
    <property type="term" value="F:L-lactate dehydrogenase activity"/>
    <property type="evidence" value="ECO:0007669"/>
    <property type="project" value="UniProtKB-UniRule"/>
</dbReference>
<dbReference type="GO" id="GO:0006096">
    <property type="term" value="P:glycolytic process"/>
    <property type="evidence" value="ECO:0007669"/>
    <property type="project" value="UniProtKB-UniRule"/>
</dbReference>
<dbReference type="GO" id="GO:0006089">
    <property type="term" value="P:lactate metabolic process"/>
    <property type="evidence" value="ECO:0007669"/>
    <property type="project" value="TreeGrafter"/>
</dbReference>
<dbReference type="CDD" id="cd05291">
    <property type="entry name" value="HicDH_like"/>
    <property type="match status" value="1"/>
</dbReference>
<dbReference type="FunFam" id="3.40.50.720:FF:000018">
    <property type="entry name" value="Malate dehydrogenase"/>
    <property type="match status" value="1"/>
</dbReference>
<dbReference type="Gene3D" id="3.90.110.10">
    <property type="entry name" value="Lactate dehydrogenase/glycoside hydrolase, family 4, C-terminal"/>
    <property type="match status" value="1"/>
</dbReference>
<dbReference type="Gene3D" id="3.40.50.720">
    <property type="entry name" value="NAD(P)-binding Rossmann-like Domain"/>
    <property type="match status" value="1"/>
</dbReference>
<dbReference type="HAMAP" id="MF_00488">
    <property type="entry name" value="Lactate_dehydrog"/>
    <property type="match status" value="1"/>
</dbReference>
<dbReference type="InterPro" id="IPR001557">
    <property type="entry name" value="L-lactate/malate_DH"/>
</dbReference>
<dbReference type="InterPro" id="IPR011304">
    <property type="entry name" value="L-lactate_DH"/>
</dbReference>
<dbReference type="InterPro" id="IPR018177">
    <property type="entry name" value="L-lactate_DH_AS"/>
</dbReference>
<dbReference type="InterPro" id="IPR022383">
    <property type="entry name" value="Lactate/malate_DH_C"/>
</dbReference>
<dbReference type="InterPro" id="IPR001236">
    <property type="entry name" value="Lactate/malate_DH_N"/>
</dbReference>
<dbReference type="InterPro" id="IPR015955">
    <property type="entry name" value="Lactate_DH/Glyco_Ohase_4_C"/>
</dbReference>
<dbReference type="InterPro" id="IPR036291">
    <property type="entry name" value="NAD(P)-bd_dom_sf"/>
</dbReference>
<dbReference type="NCBIfam" id="TIGR01771">
    <property type="entry name" value="L-LDH-NAD"/>
    <property type="match status" value="1"/>
</dbReference>
<dbReference type="NCBIfam" id="NF000824">
    <property type="entry name" value="PRK00066.1"/>
    <property type="match status" value="1"/>
</dbReference>
<dbReference type="NCBIfam" id="NF004863">
    <property type="entry name" value="PRK06223.1"/>
    <property type="match status" value="1"/>
</dbReference>
<dbReference type="PANTHER" id="PTHR43128">
    <property type="entry name" value="L-2-HYDROXYCARBOXYLATE DEHYDROGENASE (NAD(P)(+))"/>
    <property type="match status" value="1"/>
</dbReference>
<dbReference type="PANTHER" id="PTHR43128:SF16">
    <property type="entry name" value="L-LACTATE DEHYDROGENASE"/>
    <property type="match status" value="1"/>
</dbReference>
<dbReference type="Pfam" id="PF02866">
    <property type="entry name" value="Ldh_1_C"/>
    <property type="match status" value="1"/>
</dbReference>
<dbReference type="Pfam" id="PF00056">
    <property type="entry name" value="Ldh_1_N"/>
    <property type="match status" value="1"/>
</dbReference>
<dbReference type="PIRSF" id="PIRSF000102">
    <property type="entry name" value="Lac_mal_DH"/>
    <property type="match status" value="1"/>
</dbReference>
<dbReference type="PRINTS" id="PR00086">
    <property type="entry name" value="LLDHDRGNASE"/>
</dbReference>
<dbReference type="SUPFAM" id="SSF56327">
    <property type="entry name" value="LDH C-terminal domain-like"/>
    <property type="match status" value="1"/>
</dbReference>
<dbReference type="SUPFAM" id="SSF51735">
    <property type="entry name" value="NAD(P)-binding Rossmann-fold domains"/>
    <property type="match status" value="1"/>
</dbReference>
<dbReference type="PROSITE" id="PS00064">
    <property type="entry name" value="L_LDH"/>
    <property type="match status" value="1"/>
</dbReference>
<feature type="chain" id="PRO_1000026505" description="L-lactate dehydrogenase">
    <location>
        <begin position="1"/>
        <end position="317"/>
    </location>
</feature>
<feature type="active site" description="Proton acceptor" evidence="1">
    <location>
        <position position="179"/>
    </location>
</feature>
<feature type="binding site" evidence="1">
    <location>
        <position position="17"/>
    </location>
    <ligand>
        <name>NAD(+)</name>
        <dbReference type="ChEBI" id="CHEBI:57540"/>
    </ligand>
</feature>
<feature type="binding site" evidence="1">
    <location>
        <position position="38"/>
    </location>
    <ligand>
        <name>NAD(+)</name>
        <dbReference type="ChEBI" id="CHEBI:57540"/>
    </ligand>
</feature>
<feature type="binding site" evidence="1">
    <location>
        <position position="43"/>
    </location>
    <ligand>
        <name>NAD(+)</name>
        <dbReference type="ChEBI" id="CHEBI:57540"/>
    </ligand>
</feature>
<feature type="binding site" evidence="1">
    <location>
        <position position="69"/>
    </location>
    <ligand>
        <name>NAD(+)</name>
        <dbReference type="ChEBI" id="CHEBI:57540"/>
    </ligand>
</feature>
<feature type="binding site" evidence="1">
    <location>
        <begin position="83"/>
        <end position="84"/>
    </location>
    <ligand>
        <name>NAD(+)</name>
        <dbReference type="ChEBI" id="CHEBI:57540"/>
    </ligand>
</feature>
<feature type="binding site" evidence="1">
    <location>
        <position position="86"/>
    </location>
    <ligand>
        <name>substrate</name>
    </ligand>
</feature>
<feature type="binding site" evidence="1">
    <location>
        <position position="92"/>
    </location>
    <ligand>
        <name>substrate</name>
    </ligand>
</feature>
<feature type="binding site" evidence="1">
    <location>
        <position position="105"/>
    </location>
    <ligand>
        <name>NAD(+)</name>
        <dbReference type="ChEBI" id="CHEBI:57540"/>
    </ligand>
</feature>
<feature type="binding site" evidence="1">
    <location>
        <begin position="122"/>
        <end position="124"/>
    </location>
    <ligand>
        <name>NAD(+)</name>
        <dbReference type="ChEBI" id="CHEBI:57540"/>
    </ligand>
</feature>
<feature type="binding site" evidence="1">
    <location>
        <begin position="124"/>
        <end position="127"/>
    </location>
    <ligand>
        <name>substrate</name>
    </ligand>
</feature>
<feature type="binding site" evidence="1">
    <location>
        <position position="147"/>
    </location>
    <ligand>
        <name>NAD(+)</name>
        <dbReference type="ChEBI" id="CHEBI:57540"/>
    </ligand>
</feature>
<feature type="binding site" evidence="1">
    <location>
        <begin position="152"/>
        <end position="155"/>
    </location>
    <ligand>
        <name>substrate</name>
    </ligand>
</feature>
<feature type="binding site" evidence="1">
    <location>
        <position position="157"/>
    </location>
    <ligand>
        <name>beta-D-fructose 1,6-bisphosphate</name>
        <dbReference type="ChEBI" id="CHEBI:32966"/>
        <note>allosteric activator</note>
    </ligand>
</feature>
<feature type="binding site" evidence="1">
    <location>
        <position position="172"/>
    </location>
    <ligand>
        <name>beta-D-fructose 1,6-bisphosphate</name>
        <dbReference type="ChEBI" id="CHEBI:32966"/>
        <note>allosteric activator</note>
    </ligand>
</feature>
<feature type="binding site" evidence="1">
    <location>
        <position position="233"/>
    </location>
    <ligand>
        <name>substrate</name>
    </ligand>
</feature>
<feature type="modified residue" description="Phosphotyrosine" evidence="1">
    <location>
        <position position="224"/>
    </location>
</feature>
<organism>
    <name type="scientific">Geobacillus thermodenitrificans (strain NG80-2)</name>
    <dbReference type="NCBI Taxonomy" id="420246"/>
    <lineage>
        <taxon>Bacteria</taxon>
        <taxon>Bacillati</taxon>
        <taxon>Bacillota</taxon>
        <taxon>Bacilli</taxon>
        <taxon>Bacillales</taxon>
        <taxon>Anoxybacillaceae</taxon>
        <taxon>Geobacillus</taxon>
    </lineage>
</organism>
<reference key="1">
    <citation type="journal article" date="2007" name="Proc. Natl. Acad. Sci. U.S.A.">
        <title>Genome and proteome of long-chain alkane degrading Geobacillus thermodenitrificans NG80-2 isolated from a deep-subsurface oil reservoir.</title>
        <authorList>
            <person name="Feng L."/>
            <person name="Wang W."/>
            <person name="Cheng J."/>
            <person name="Ren Y."/>
            <person name="Zhao G."/>
            <person name="Gao C."/>
            <person name="Tang Y."/>
            <person name="Liu X."/>
            <person name="Han W."/>
            <person name="Peng X."/>
            <person name="Liu R."/>
            <person name="Wang L."/>
        </authorList>
    </citation>
    <scope>NUCLEOTIDE SEQUENCE [LARGE SCALE GENOMIC DNA]</scope>
    <source>
        <strain>NG80-2</strain>
    </source>
</reference>
<proteinExistence type="inferred from homology"/>
<name>LDH_GEOTN</name>